<proteinExistence type="inferred from homology"/>
<comment type="function">
    <text evidence="1">The heterodimer acts as both an ATP-dependent DNA helicase and an ATP-dependent, dual-direction single-stranded exonuclease. Recognizes the chi site generating a DNA molecule suitable for the initiation of homologous recombination. The AddA nuclease domain is required for chi fragment generation; this subunit has the helicase and 3' -&gt; 5' nuclease activities.</text>
</comment>
<comment type="catalytic activity">
    <reaction evidence="1">
        <text>Couples ATP hydrolysis with the unwinding of duplex DNA by translocating in the 3'-5' direction.</text>
        <dbReference type="EC" id="5.6.2.4"/>
    </reaction>
</comment>
<comment type="catalytic activity">
    <reaction evidence="1">
        <text>ATP + H2O = ADP + phosphate + H(+)</text>
        <dbReference type="Rhea" id="RHEA:13065"/>
        <dbReference type="ChEBI" id="CHEBI:15377"/>
        <dbReference type="ChEBI" id="CHEBI:15378"/>
        <dbReference type="ChEBI" id="CHEBI:30616"/>
        <dbReference type="ChEBI" id="CHEBI:43474"/>
        <dbReference type="ChEBI" id="CHEBI:456216"/>
        <dbReference type="EC" id="5.6.2.4"/>
    </reaction>
</comment>
<comment type="cofactor">
    <cofactor evidence="1">
        <name>Mg(2+)</name>
        <dbReference type="ChEBI" id="CHEBI:18420"/>
    </cofactor>
</comment>
<comment type="subunit">
    <text evidence="1">Heterodimer of AddA and AddB/RexB.</text>
</comment>
<comment type="similarity">
    <text evidence="1">Belongs to the helicase family. AddA subfamily.</text>
</comment>
<organism>
    <name type="scientific">Clostridium botulinum (strain Langeland / NCTC 10281 / Type F)</name>
    <dbReference type="NCBI Taxonomy" id="441772"/>
    <lineage>
        <taxon>Bacteria</taxon>
        <taxon>Bacillati</taxon>
        <taxon>Bacillota</taxon>
        <taxon>Clostridia</taxon>
        <taxon>Eubacteriales</taxon>
        <taxon>Clostridiaceae</taxon>
        <taxon>Clostridium</taxon>
    </lineage>
</organism>
<sequence length="1279" mass="150195">MSGTKWTDEQRQAIFTKNCNLLVVAGAGAGKTAVLVQRIIEKILDKEEPIDIDKLLVVTFTNAAAAEMRERIGDAISKGLDEDPESKVLRKQLTLLNKSNIMTIHSFCLQVIKNNFHTMEIDPNFRICDETEGILMKQEAIDELFDELYEIENEDFINLVESYASRKDTRLQEVVLELHRFAKSAPFPYTWLLNMAEGFNVGENFNFEETLWADMIMEDMKVLLHGFKNMLQQSIDVILNSEGIDYYYEPFKMDLSFINSLLEKSSFKEFRGEIIAYDFPKLPLKRNKDADKEAKERVKKLRDKVKKKIVELKNILDSYENEFIKKEFIFLYPSMKALSNLVILFDKKYEAKKRERDLIDFNDIEHLCLSILTDKNSDGHIIPSDIALNYRKKFAEVLIDEYQDSNLVQEVIMSMVSRVKGYWSFYNGQLIFNEEEINLEEPQIGLDIPNRFMVGDVKQSIYRFRQAKPEIFLDKYNEYNEEEDRKNRKVKLFKNFRSREEVINGVNYLFKQIMSKTIGELDYTEEEALKVGASYGEEVKGEPIELCLMDKKYEISEEVLKEYNVDEEEALDNIQLEGRLVAKKIQKLVGNNLEGGLKVFDKKLGEYRNLQYRDIVILMRATSNWAPVFVEELAKEGIPVFADTNSGYFDTAEIKTMISLLQIIDNPLQDIPLLSVLRSPIASFTDDELIDIRMINKNITFYECMEIIYRLYKNEKLDSYYSFYIEDENKINKIIKDMNEKLKNKICSFIEKLKLWREKSIHIDIDEFIWFLYVETGYYGYAGALQAGEQRQANLRILFQRAKQYAKTSYKGLFNFINFINKLKFSSGDMGSAKILGENENVVRIMSIHKSKGLEFPVVILSGTGKNFNMTDLNKNILFHRDLGYGPDYVDTERRIAYPSLVKNIIKNKIRLETLSEEMRILYVALTRAREKLIITGLINNMDKTVEDWLNLSEDKNKVPEYAVMSGKTYLDWIGPALIKHKDAVSFREELKMTSELSNIVDDKSKWKIELWNKRELLKEKVEEDEVEISEKIKETLMNLEESNYKEEIYKRLSFKYKYDNASSIPTKLSVSDVKKQFILDEKENTEELFKKLELRKPMFMEEKKKISPSERGTIIHLFMQHLDLKKAESEEDIKEQINRLIEREFITYEQSKVISPYKILKFCRGELGKRILNSNNVNKEMPFSIEIPALEIYKELDKEIYKDEKLIIQGVIDCYFEEEDGLVLLDYKTDYVNDIEEIKNRYEIQIKYYEEALNRITGKNVKDKYLYLFSVDNYIKID</sequence>
<reference key="1">
    <citation type="submission" date="2007-06" db="EMBL/GenBank/DDBJ databases">
        <authorList>
            <person name="Brinkac L.M."/>
            <person name="Daugherty S."/>
            <person name="Dodson R.J."/>
            <person name="Madupu R."/>
            <person name="Brown J.L."/>
            <person name="Bruce D."/>
            <person name="Detter C."/>
            <person name="Munk C."/>
            <person name="Smith L.A."/>
            <person name="Smith T.J."/>
            <person name="White O."/>
            <person name="Brettin T.S."/>
        </authorList>
    </citation>
    <scope>NUCLEOTIDE SEQUENCE [LARGE SCALE GENOMIC DNA]</scope>
    <source>
        <strain>Langeland / NCTC 10281 / Type F</strain>
    </source>
</reference>
<feature type="chain" id="PRO_0000379253" description="ATP-dependent helicase/nuclease subunit A">
    <location>
        <begin position="1"/>
        <end position="1279"/>
    </location>
</feature>
<feature type="domain" description="UvrD-like helicase ATP-binding" evidence="1">
    <location>
        <begin position="4"/>
        <end position="499"/>
    </location>
</feature>
<feature type="domain" description="UvrD-like helicase C-terminal" evidence="1">
    <location>
        <begin position="526"/>
        <end position="853"/>
    </location>
</feature>
<feature type="binding site" evidence="1">
    <location>
        <begin position="25"/>
        <end position="32"/>
    </location>
    <ligand>
        <name>ATP</name>
        <dbReference type="ChEBI" id="CHEBI:30616"/>
    </ligand>
</feature>
<accession>A7GAJ8</accession>
<dbReference type="EC" id="3.1.-.-" evidence="1"/>
<dbReference type="EC" id="5.6.2.4" evidence="1"/>
<dbReference type="EMBL" id="CP000728">
    <property type="protein sequence ID" value="ABS39663.1"/>
    <property type="molecule type" value="Genomic_DNA"/>
</dbReference>
<dbReference type="RefSeq" id="WP_011987449.1">
    <property type="nucleotide sequence ID" value="NC_009699.1"/>
</dbReference>
<dbReference type="SMR" id="A7GAJ8"/>
<dbReference type="KEGG" id="cbf:CLI_0522"/>
<dbReference type="HOGENOM" id="CLU_001114_3_1_9"/>
<dbReference type="Proteomes" id="UP000002410">
    <property type="component" value="Chromosome"/>
</dbReference>
<dbReference type="GO" id="GO:0005829">
    <property type="term" value="C:cytosol"/>
    <property type="evidence" value="ECO:0007669"/>
    <property type="project" value="TreeGrafter"/>
</dbReference>
<dbReference type="GO" id="GO:0033202">
    <property type="term" value="C:DNA helicase complex"/>
    <property type="evidence" value="ECO:0007669"/>
    <property type="project" value="TreeGrafter"/>
</dbReference>
<dbReference type="GO" id="GO:0043138">
    <property type="term" value="F:3'-5' DNA helicase activity"/>
    <property type="evidence" value="ECO:0007669"/>
    <property type="project" value="UniProtKB-UniRule"/>
</dbReference>
<dbReference type="GO" id="GO:0008408">
    <property type="term" value="F:3'-5' exonuclease activity"/>
    <property type="evidence" value="ECO:0007669"/>
    <property type="project" value="UniProtKB-UniRule"/>
</dbReference>
<dbReference type="GO" id="GO:0005524">
    <property type="term" value="F:ATP binding"/>
    <property type="evidence" value="ECO:0007669"/>
    <property type="project" value="UniProtKB-UniRule"/>
</dbReference>
<dbReference type="GO" id="GO:0016887">
    <property type="term" value="F:ATP hydrolysis activity"/>
    <property type="evidence" value="ECO:0007669"/>
    <property type="project" value="RHEA"/>
</dbReference>
<dbReference type="GO" id="GO:0003690">
    <property type="term" value="F:double-stranded DNA binding"/>
    <property type="evidence" value="ECO:0007669"/>
    <property type="project" value="UniProtKB-UniRule"/>
</dbReference>
<dbReference type="GO" id="GO:0000724">
    <property type="term" value="P:double-strand break repair via homologous recombination"/>
    <property type="evidence" value="ECO:0007669"/>
    <property type="project" value="UniProtKB-UniRule"/>
</dbReference>
<dbReference type="CDD" id="cd17932">
    <property type="entry name" value="DEXQc_UvrD"/>
    <property type="match status" value="1"/>
</dbReference>
<dbReference type="FunFam" id="3.40.50.300:FF:001164">
    <property type="entry name" value="ATP-dependent helicase/nuclease subunit A"/>
    <property type="match status" value="1"/>
</dbReference>
<dbReference type="FunFam" id="3.40.50.300:FF:001196">
    <property type="entry name" value="ATP-dependent helicase/nuclease subunit A"/>
    <property type="match status" value="1"/>
</dbReference>
<dbReference type="FunFam" id="3.40.50.300:FF:001236">
    <property type="entry name" value="ATP-dependent helicase/nuclease subunit A"/>
    <property type="match status" value="1"/>
</dbReference>
<dbReference type="Gene3D" id="3.90.320.10">
    <property type="match status" value="1"/>
</dbReference>
<dbReference type="Gene3D" id="3.40.50.300">
    <property type="entry name" value="P-loop containing nucleotide triphosphate hydrolases"/>
    <property type="match status" value="4"/>
</dbReference>
<dbReference type="HAMAP" id="MF_01451">
    <property type="entry name" value="AddA"/>
    <property type="match status" value="1"/>
</dbReference>
<dbReference type="InterPro" id="IPR014152">
    <property type="entry name" value="AddA"/>
</dbReference>
<dbReference type="InterPro" id="IPR014017">
    <property type="entry name" value="DNA_helicase_UvrD-like_C"/>
</dbReference>
<dbReference type="InterPro" id="IPR000212">
    <property type="entry name" value="DNA_helicase_UvrD/REP"/>
</dbReference>
<dbReference type="InterPro" id="IPR027417">
    <property type="entry name" value="P-loop_NTPase"/>
</dbReference>
<dbReference type="InterPro" id="IPR011604">
    <property type="entry name" value="PDDEXK-like_dom_sf"/>
</dbReference>
<dbReference type="InterPro" id="IPR038726">
    <property type="entry name" value="PDDEXK_AddAB-type"/>
</dbReference>
<dbReference type="InterPro" id="IPR011335">
    <property type="entry name" value="Restrct_endonuc-II-like"/>
</dbReference>
<dbReference type="InterPro" id="IPR014016">
    <property type="entry name" value="UvrD-like_ATP-bd"/>
</dbReference>
<dbReference type="NCBIfam" id="TIGR02785">
    <property type="entry name" value="addA_Gpos"/>
    <property type="match status" value="1"/>
</dbReference>
<dbReference type="PANTHER" id="PTHR11070:SF48">
    <property type="entry name" value="ATP-DEPENDENT HELICASE_NUCLEASE SUBUNIT A"/>
    <property type="match status" value="1"/>
</dbReference>
<dbReference type="PANTHER" id="PTHR11070">
    <property type="entry name" value="UVRD / RECB / PCRA DNA HELICASE FAMILY MEMBER"/>
    <property type="match status" value="1"/>
</dbReference>
<dbReference type="Pfam" id="PF12705">
    <property type="entry name" value="PDDEXK_1"/>
    <property type="match status" value="1"/>
</dbReference>
<dbReference type="Pfam" id="PF00580">
    <property type="entry name" value="UvrD-helicase"/>
    <property type="match status" value="1"/>
</dbReference>
<dbReference type="Pfam" id="PF13361">
    <property type="entry name" value="UvrD_C"/>
    <property type="match status" value="1"/>
</dbReference>
<dbReference type="SUPFAM" id="SSF52540">
    <property type="entry name" value="P-loop containing nucleoside triphosphate hydrolases"/>
    <property type="match status" value="1"/>
</dbReference>
<dbReference type="SUPFAM" id="SSF52980">
    <property type="entry name" value="Restriction endonuclease-like"/>
    <property type="match status" value="1"/>
</dbReference>
<dbReference type="PROSITE" id="PS51198">
    <property type="entry name" value="UVRD_HELICASE_ATP_BIND"/>
    <property type="match status" value="1"/>
</dbReference>
<dbReference type="PROSITE" id="PS51217">
    <property type="entry name" value="UVRD_HELICASE_CTER"/>
    <property type="match status" value="1"/>
</dbReference>
<gene>
    <name evidence="1" type="primary">addA</name>
    <name type="ordered locus">CLI_0522</name>
</gene>
<keyword id="KW-0067">ATP-binding</keyword>
<keyword id="KW-0227">DNA damage</keyword>
<keyword id="KW-0234">DNA repair</keyword>
<keyword id="KW-0238">DNA-binding</keyword>
<keyword id="KW-0269">Exonuclease</keyword>
<keyword id="KW-0347">Helicase</keyword>
<keyword id="KW-0378">Hydrolase</keyword>
<keyword id="KW-0413">Isomerase</keyword>
<keyword id="KW-0540">Nuclease</keyword>
<keyword id="KW-0547">Nucleotide-binding</keyword>
<evidence type="ECO:0000255" key="1">
    <source>
        <dbReference type="HAMAP-Rule" id="MF_01451"/>
    </source>
</evidence>
<protein>
    <recommendedName>
        <fullName evidence="1">ATP-dependent helicase/nuclease subunit A</fullName>
        <ecNumber evidence="1">3.1.-.-</ecNumber>
        <ecNumber evidence="1">5.6.2.4</ecNumber>
    </recommendedName>
    <alternativeName>
        <fullName evidence="1">ATP-dependent helicase/nuclease AddA</fullName>
    </alternativeName>
    <alternativeName>
        <fullName evidence="1">DNA 3'-5' helicase AddA</fullName>
    </alternativeName>
</protein>
<name>ADDA_CLOBL</name>